<comment type="function">
    <text evidence="1">NAD-binding protein involved in the addition of a carboxymethylaminomethyl (cmnm) group at the wobble position (U34) of certain tRNAs, forming tRNA-cmnm(5)s(2)U34.</text>
</comment>
<comment type="cofactor">
    <cofactor evidence="1">
        <name>FAD</name>
        <dbReference type="ChEBI" id="CHEBI:57692"/>
    </cofactor>
</comment>
<comment type="subunit">
    <text evidence="1">Homodimer. Heterotetramer of two MnmE and two MnmG subunits.</text>
</comment>
<comment type="subcellular location">
    <subcellularLocation>
        <location evidence="1">Cytoplasm</location>
    </subcellularLocation>
</comment>
<comment type="similarity">
    <text evidence="1">Belongs to the MnmG family.</text>
</comment>
<organism>
    <name type="scientific">Clostridium kluyveri (strain ATCC 8527 / DSM 555 / NBRC 12016 / NCIMB 10680 / K1)</name>
    <dbReference type="NCBI Taxonomy" id="431943"/>
    <lineage>
        <taxon>Bacteria</taxon>
        <taxon>Bacillati</taxon>
        <taxon>Bacillota</taxon>
        <taxon>Clostridia</taxon>
        <taxon>Eubacteriales</taxon>
        <taxon>Clostridiaceae</taxon>
        <taxon>Clostridium</taxon>
    </lineage>
</organism>
<proteinExistence type="inferred from homology"/>
<name>MNMG_CLOK5</name>
<gene>
    <name evidence="1" type="primary">mnmG</name>
    <name evidence="1" type="synonym">gidA</name>
    <name type="ordered locus">CKL_3920</name>
</gene>
<reference key="1">
    <citation type="journal article" date="2008" name="Proc. Natl. Acad. Sci. U.S.A.">
        <title>The genome of Clostridium kluyveri, a strict anaerobe with unique metabolic features.</title>
        <authorList>
            <person name="Seedorf H."/>
            <person name="Fricke W.F."/>
            <person name="Veith B."/>
            <person name="Brueggemann H."/>
            <person name="Liesegang H."/>
            <person name="Strittmatter A."/>
            <person name="Miethke M."/>
            <person name="Buckel W."/>
            <person name="Hinderberger J."/>
            <person name="Li F."/>
            <person name="Hagemeier C."/>
            <person name="Thauer R.K."/>
            <person name="Gottschalk G."/>
        </authorList>
    </citation>
    <scope>NUCLEOTIDE SEQUENCE [LARGE SCALE GENOMIC DNA]</scope>
    <source>
        <strain>ATCC 8527 / DSM 555 / NBRC 12016 / NCIMB 10680 / K1</strain>
    </source>
</reference>
<feature type="chain" id="PRO_1000076312" description="tRNA uridine 5-carboxymethylaminomethyl modification enzyme MnmG">
    <location>
        <begin position="1"/>
        <end position="628"/>
    </location>
</feature>
<feature type="binding site" evidence="1">
    <location>
        <begin position="14"/>
        <end position="19"/>
    </location>
    <ligand>
        <name>FAD</name>
        <dbReference type="ChEBI" id="CHEBI:57692"/>
    </ligand>
</feature>
<feature type="binding site" evidence="1">
    <location>
        <begin position="274"/>
        <end position="288"/>
    </location>
    <ligand>
        <name>NAD(+)</name>
        <dbReference type="ChEBI" id="CHEBI:57540"/>
    </ligand>
</feature>
<keyword id="KW-0963">Cytoplasm</keyword>
<keyword id="KW-0274">FAD</keyword>
<keyword id="KW-0285">Flavoprotein</keyword>
<keyword id="KW-0520">NAD</keyword>
<keyword id="KW-1185">Reference proteome</keyword>
<keyword id="KW-0819">tRNA processing</keyword>
<evidence type="ECO:0000255" key="1">
    <source>
        <dbReference type="HAMAP-Rule" id="MF_00129"/>
    </source>
</evidence>
<dbReference type="EMBL" id="CP000673">
    <property type="protein sequence ID" value="EDK35896.1"/>
    <property type="molecule type" value="Genomic_DNA"/>
</dbReference>
<dbReference type="RefSeq" id="WP_012104233.1">
    <property type="nucleotide sequence ID" value="NC_009706.1"/>
</dbReference>
<dbReference type="SMR" id="A5N450"/>
<dbReference type="STRING" id="431943.CKL_3920"/>
<dbReference type="KEGG" id="ckl:CKL_3920"/>
<dbReference type="eggNOG" id="COG0445">
    <property type="taxonomic scope" value="Bacteria"/>
</dbReference>
<dbReference type="HOGENOM" id="CLU_007831_2_2_9"/>
<dbReference type="Proteomes" id="UP000002411">
    <property type="component" value="Chromosome"/>
</dbReference>
<dbReference type="GO" id="GO:0005829">
    <property type="term" value="C:cytosol"/>
    <property type="evidence" value="ECO:0007669"/>
    <property type="project" value="TreeGrafter"/>
</dbReference>
<dbReference type="GO" id="GO:0050660">
    <property type="term" value="F:flavin adenine dinucleotide binding"/>
    <property type="evidence" value="ECO:0007669"/>
    <property type="project" value="UniProtKB-UniRule"/>
</dbReference>
<dbReference type="GO" id="GO:0030488">
    <property type="term" value="P:tRNA methylation"/>
    <property type="evidence" value="ECO:0007669"/>
    <property type="project" value="TreeGrafter"/>
</dbReference>
<dbReference type="GO" id="GO:0002098">
    <property type="term" value="P:tRNA wobble uridine modification"/>
    <property type="evidence" value="ECO:0007669"/>
    <property type="project" value="InterPro"/>
</dbReference>
<dbReference type="FunFam" id="1.10.10.1800:FF:000001">
    <property type="entry name" value="tRNA uridine 5-carboxymethylaminomethyl modification enzyme MnmG"/>
    <property type="match status" value="1"/>
</dbReference>
<dbReference type="FunFam" id="1.10.150.570:FF:000001">
    <property type="entry name" value="tRNA uridine 5-carboxymethylaminomethyl modification enzyme MnmG"/>
    <property type="match status" value="1"/>
</dbReference>
<dbReference type="FunFam" id="3.50.50.60:FF:000002">
    <property type="entry name" value="tRNA uridine 5-carboxymethylaminomethyl modification enzyme MnmG"/>
    <property type="match status" value="1"/>
</dbReference>
<dbReference type="FunFam" id="3.50.50.60:FF:000063">
    <property type="entry name" value="tRNA uridine 5-carboxymethylaminomethyl modification enzyme MnmG"/>
    <property type="match status" value="1"/>
</dbReference>
<dbReference type="Gene3D" id="3.50.50.60">
    <property type="entry name" value="FAD/NAD(P)-binding domain"/>
    <property type="match status" value="2"/>
</dbReference>
<dbReference type="Gene3D" id="1.10.150.570">
    <property type="entry name" value="GidA associated domain, C-terminal subdomain"/>
    <property type="match status" value="1"/>
</dbReference>
<dbReference type="Gene3D" id="1.10.10.1800">
    <property type="entry name" value="tRNA uridine 5-carboxymethylaminomethyl modification enzyme MnmG/GidA"/>
    <property type="match status" value="1"/>
</dbReference>
<dbReference type="HAMAP" id="MF_00129">
    <property type="entry name" value="MnmG_GidA"/>
    <property type="match status" value="1"/>
</dbReference>
<dbReference type="InterPro" id="IPR036188">
    <property type="entry name" value="FAD/NAD-bd_sf"/>
</dbReference>
<dbReference type="InterPro" id="IPR049312">
    <property type="entry name" value="GIDA_C_N"/>
</dbReference>
<dbReference type="InterPro" id="IPR004416">
    <property type="entry name" value="MnmG"/>
</dbReference>
<dbReference type="InterPro" id="IPR002218">
    <property type="entry name" value="MnmG-rel"/>
</dbReference>
<dbReference type="InterPro" id="IPR020595">
    <property type="entry name" value="MnmG-rel_CS"/>
</dbReference>
<dbReference type="InterPro" id="IPR026904">
    <property type="entry name" value="MnmG_C"/>
</dbReference>
<dbReference type="InterPro" id="IPR047001">
    <property type="entry name" value="MnmG_C_subdom"/>
</dbReference>
<dbReference type="InterPro" id="IPR044920">
    <property type="entry name" value="MnmG_C_subdom_sf"/>
</dbReference>
<dbReference type="InterPro" id="IPR040131">
    <property type="entry name" value="MnmG_N"/>
</dbReference>
<dbReference type="NCBIfam" id="TIGR00136">
    <property type="entry name" value="mnmG_gidA"/>
    <property type="match status" value="1"/>
</dbReference>
<dbReference type="PANTHER" id="PTHR11806">
    <property type="entry name" value="GLUCOSE INHIBITED DIVISION PROTEIN A"/>
    <property type="match status" value="1"/>
</dbReference>
<dbReference type="PANTHER" id="PTHR11806:SF0">
    <property type="entry name" value="PROTEIN MTO1 HOMOLOG, MITOCHONDRIAL"/>
    <property type="match status" value="1"/>
</dbReference>
<dbReference type="Pfam" id="PF01134">
    <property type="entry name" value="GIDA"/>
    <property type="match status" value="1"/>
</dbReference>
<dbReference type="Pfam" id="PF21680">
    <property type="entry name" value="GIDA_C_1st"/>
    <property type="match status" value="1"/>
</dbReference>
<dbReference type="Pfam" id="PF13932">
    <property type="entry name" value="SAM_GIDA_C"/>
    <property type="match status" value="1"/>
</dbReference>
<dbReference type="PRINTS" id="PR00411">
    <property type="entry name" value="PNDRDTASEI"/>
</dbReference>
<dbReference type="SMART" id="SM01228">
    <property type="entry name" value="GIDA_assoc_3"/>
    <property type="match status" value="1"/>
</dbReference>
<dbReference type="SUPFAM" id="SSF51905">
    <property type="entry name" value="FAD/NAD(P)-binding domain"/>
    <property type="match status" value="1"/>
</dbReference>
<dbReference type="PROSITE" id="PS01280">
    <property type="entry name" value="GIDA_1"/>
    <property type="match status" value="1"/>
</dbReference>
<dbReference type="PROSITE" id="PS01281">
    <property type="entry name" value="GIDA_2"/>
    <property type="match status" value="1"/>
</dbReference>
<sequence>MEYFSERYDVIVIGAGHAGCEAGLAAARMGCRTLMCTMNLDSIGFMPCNPNIGGTAKGHLVREIDALGGEMGVNIDATFIQSRMLNTSKGPAVHSLRAQADKRNYSGRMKSVLERQHNLDLKQLEVVGIRIDNEGKVCGVITKNGAYFETKTIVLSTGTYLKGKVIIGDVSYSSGPNGFMPANDLSQSLLDLGIEIRRFKTGTPARVNRRSVDFSKMIEQPGDKRIVPFSFMSENLDRKQVSCYLTYTTENTTKVIRENINRSPLFNGSIKSVGPRYCPSIEDKIVRFPNKENHQIFIEPEGEDTNELYVDGASTSMPEDVQIAMYRTIIGLENVEFLRTGYAIEYDCINPLQLRPTLEFKKVEGLFGAGQLNGSSGYEEAASQGIIAGINAALKVKGKEPFILKRSDAYIGVLIDDLVTKGTEEPYRMMTSRSEYRLILRQDNADLRLTEMGYKIGLVTKERYDKYLERKNSIETEIKRIKNLYITPKKEVIEFLNSLGSSELKKSISLYELIKRPELDYFKLQLLDMDRPELNEDVQEEVNIISKYEGYIKKQLEQVQQFKKFENKFIPENIDYDEIKGLRIEANQKLKKIRPISIGQASRISGVSPADISVLLVYLEKKHREKLL</sequence>
<accession>A5N450</accession>
<protein>
    <recommendedName>
        <fullName evidence="1">tRNA uridine 5-carboxymethylaminomethyl modification enzyme MnmG</fullName>
    </recommendedName>
    <alternativeName>
        <fullName evidence="1">Glucose-inhibited division protein A</fullName>
    </alternativeName>
</protein>